<keyword id="KW-0414">Isoprene biosynthesis</keyword>
<keyword id="KW-0548">Nucleotidyltransferase</keyword>
<keyword id="KW-0808">Transferase</keyword>
<accession>Q118M1</accession>
<organism>
    <name type="scientific">Trichodesmium erythraeum (strain IMS101)</name>
    <dbReference type="NCBI Taxonomy" id="203124"/>
    <lineage>
        <taxon>Bacteria</taxon>
        <taxon>Bacillati</taxon>
        <taxon>Cyanobacteriota</taxon>
        <taxon>Cyanophyceae</taxon>
        <taxon>Oscillatoriophycideae</taxon>
        <taxon>Oscillatoriales</taxon>
        <taxon>Microcoleaceae</taxon>
        <taxon>Trichodesmium</taxon>
    </lineage>
</organism>
<gene>
    <name evidence="1" type="primary">ispD</name>
    <name type="ordered locus">Tery_0609</name>
</gene>
<dbReference type="EC" id="2.7.7.60" evidence="1"/>
<dbReference type="EMBL" id="CP000393">
    <property type="protein sequence ID" value="ABG50053.1"/>
    <property type="molecule type" value="Genomic_DNA"/>
</dbReference>
<dbReference type="RefSeq" id="WP_011610447.1">
    <property type="nucleotide sequence ID" value="NC_008312.1"/>
</dbReference>
<dbReference type="SMR" id="Q118M1"/>
<dbReference type="STRING" id="203124.Tery_0609"/>
<dbReference type="KEGG" id="ter:Tery_0609"/>
<dbReference type="eggNOG" id="COG1211">
    <property type="taxonomic scope" value="Bacteria"/>
</dbReference>
<dbReference type="HOGENOM" id="CLU_061281_1_0_3"/>
<dbReference type="OrthoDB" id="9806837at2"/>
<dbReference type="UniPathway" id="UPA00056">
    <property type="reaction ID" value="UER00093"/>
</dbReference>
<dbReference type="GO" id="GO:0050518">
    <property type="term" value="F:2-C-methyl-D-erythritol 4-phosphate cytidylyltransferase activity"/>
    <property type="evidence" value="ECO:0007669"/>
    <property type="project" value="UniProtKB-UniRule"/>
</dbReference>
<dbReference type="GO" id="GO:0019288">
    <property type="term" value="P:isopentenyl diphosphate biosynthetic process, methylerythritol 4-phosphate pathway"/>
    <property type="evidence" value="ECO:0007669"/>
    <property type="project" value="UniProtKB-UniRule"/>
</dbReference>
<dbReference type="CDD" id="cd02516">
    <property type="entry name" value="CDP-ME_synthetase"/>
    <property type="match status" value="1"/>
</dbReference>
<dbReference type="FunFam" id="3.90.550.10:FF:000003">
    <property type="entry name" value="2-C-methyl-D-erythritol 4-phosphate cytidylyltransferase"/>
    <property type="match status" value="1"/>
</dbReference>
<dbReference type="Gene3D" id="3.90.550.10">
    <property type="entry name" value="Spore Coat Polysaccharide Biosynthesis Protein SpsA, Chain A"/>
    <property type="match status" value="1"/>
</dbReference>
<dbReference type="HAMAP" id="MF_00108">
    <property type="entry name" value="IspD"/>
    <property type="match status" value="1"/>
</dbReference>
<dbReference type="InterPro" id="IPR001228">
    <property type="entry name" value="IspD"/>
</dbReference>
<dbReference type="InterPro" id="IPR034683">
    <property type="entry name" value="IspD/TarI"/>
</dbReference>
<dbReference type="InterPro" id="IPR050088">
    <property type="entry name" value="IspD/TarI_cytidylyltransf_bact"/>
</dbReference>
<dbReference type="InterPro" id="IPR018294">
    <property type="entry name" value="ISPD_synthase_CS"/>
</dbReference>
<dbReference type="InterPro" id="IPR029044">
    <property type="entry name" value="Nucleotide-diphossugar_trans"/>
</dbReference>
<dbReference type="NCBIfam" id="TIGR00453">
    <property type="entry name" value="ispD"/>
    <property type="match status" value="1"/>
</dbReference>
<dbReference type="PANTHER" id="PTHR32125">
    <property type="entry name" value="2-C-METHYL-D-ERYTHRITOL 4-PHOSPHATE CYTIDYLYLTRANSFERASE, CHLOROPLASTIC"/>
    <property type="match status" value="1"/>
</dbReference>
<dbReference type="PANTHER" id="PTHR32125:SF4">
    <property type="entry name" value="2-C-METHYL-D-ERYTHRITOL 4-PHOSPHATE CYTIDYLYLTRANSFERASE, CHLOROPLASTIC"/>
    <property type="match status" value="1"/>
</dbReference>
<dbReference type="Pfam" id="PF01128">
    <property type="entry name" value="IspD"/>
    <property type="match status" value="1"/>
</dbReference>
<dbReference type="SUPFAM" id="SSF53448">
    <property type="entry name" value="Nucleotide-diphospho-sugar transferases"/>
    <property type="match status" value="1"/>
</dbReference>
<dbReference type="PROSITE" id="PS01295">
    <property type="entry name" value="ISPD"/>
    <property type="match status" value="1"/>
</dbReference>
<name>ISPD_TRIEI</name>
<evidence type="ECO:0000255" key="1">
    <source>
        <dbReference type="HAMAP-Rule" id="MF_00108"/>
    </source>
</evidence>
<comment type="function">
    <text evidence="1">Catalyzes the formation of 4-diphosphocytidyl-2-C-methyl-D-erythritol from CTP and 2-C-methyl-D-erythritol 4-phosphate (MEP).</text>
</comment>
<comment type="catalytic activity">
    <reaction evidence="1">
        <text>2-C-methyl-D-erythritol 4-phosphate + CTP + H(+) = 4-CDP-2-C-methyl-D-erythritol + diphosphate</text>
        <dbReference type="Rhea" id="RHEA:13429"/>
        <dbReference type="ChEBI" id="CHEBI:15378"/>
        <dbReference type="ChEBI" id="CHEBI:33019"/>
        <dbReference type="ChEBI" id="CHEBI:37563"/>
        <dbReference type="ChEBI" id="CHEBI:57823"/>
        <dbReference type="ChEBI" id="CHEBI:58262"/>
        <dbReference type="EC" id="2.7.7.60"/>
    </reaction>
</comment>
<comment type="pathway">
    <text evidence="1">Isoprenoid biosynthesis; isopentenyl diphosphate biosynthesis via DXP pathway; isopentenyl diphosphate from 1-deoxy-D-xylulose 5-phosphate: step 2/6.</text>
</comment>
<comment type="similarity">
    <text evidence="1">Belongs to the IspD/TarI cytidylyltransferase family. IspD subfamily.</text>
</comment>
<sequence>MNLLIPAAGIGRRMGGSRNKLLLTLLGKSLLSWTLEAAVKSDHITWIGIIGQPIDFPDFQKNISDLSTDKHIELIEGGATRQESVYNGLQALPSAAERVLIHDGARCLATPELLDRCAVEILKCPGIIASVPVKDTIKVVDPSGIIQDTPNRRNLWAAQTPQGFDVKLLKECHKKGQILGWEVTDDAALFEKCGLPVKILEGEETNLKVTTPLDLKIAEFILLKAL</sequence>
<reference key="1">
    <citation type="journal article" date="2015" name="Proc. Natl. Acad. Sci. U.S.A.">
        <title>Trichodesmium genome maintains abundant, widespread noncoding DNA in situ, despite oligotrophic lifestyle.</title>
        <authorList>
            <person name="Walworth N."/>
            <person name="Pfreundt U."/>
            <person name="Nelson W.C."/>
            <person name="Mincer T."/>
            <person name="Heidelberg J.F."/>
            <person name="Fu F."/>
            <person name="Waterbury J.B."/>
            <person name="Glavina del Rio T."/>
            <person name="Goodwin L."/>
            <person name="Kyrpides N.C."/>
            <person name="Land M.L."/>
            <person name="Woyke T."/>
            <person name="Hutchins D.A."/>
            <person name="Hess W.R."/>
            <person name="Webb E.A."/>
        </authorList>
    </citation>
    <scope>NUCLEOTIDE SEQUENCE [LARGE SCALE GENOMIC DNA]</scope>
    <source>
        <strain>IMS101</strain>
    </source>
</reference>
<feature type="chain" id="PRO_1000022957" description="2-C-methyl-D-erythritol 4-phosphate cytidylyltransferase">
    <location>
        <begin position="1"/>
        <end position="226"/>
    </location>
</feature>
<feature type="site" description="Transition state stabilizer" evidence="1">
    <location>
        <position position="13"/>
    </location>
</feature>
<feature type="site" description="Transition state stabilizer" evidence="1">
    <location>
        <position position="20"/>
    </location>
</feature>
<feature type="site" description="Positions MEP for the nucleophilic attack" evidence="1">
    <location>
        <position position="152"/>
    </location>
</feature>
<feature type="site" description="Positions MEP for the nucleophilic attack" evidence="1">
    <location>
        <position position="208"/>
    </location>
</feature>
<protein>
    <recommendedName>
        <fullName evidence="1">2-C-methyl-D-erythritol 4-phosphate cytidylyltransferase</fullName>
        <ecNumber evidence="1">2.7.7.60</ecNumber>
    </recommendedName>
    <alternativeName>
        <fullName evidence="1">4-diphosphocytidyl-2C-methyl-D-erythritol synthase</fullName>
    </alternativeName>
    <alternativeName>
        <fullName evidence="1">MEP cytidylyltransferase</fullName>
        <shortName evidence="1">MCT</shortName>
    </alternativeName>
</protein>
<proteinExistence type="inferred from homology"/>